<gene>
    <name type="ORF">SPAC2F7.17</name>
</gene>
<sequence>MLLTKKVLWYFRHGIEYQIRSIACKKGYSEHNVSRVLIEKARSLSSEYLQFHQVNNKDQSAMTNDTDLAKRIARLRRVHNAYSKFKSLSEQISDLKQMEAQESDAEVKMMAVTEINEISNKIPKSIEDLENTLLPQADSYALPALIEIRPGVGGTEAAIFANELVEMYFQYANFKGWNCKFISKSAVQGLEAITEAIFSIEGEGAYGHLMLEGGVHRVQRTPATETKGRVHTSTASVIVLPQVSNDESSSLYDSSEVKIEVMRSRGAGGQHVNRTESAVRLTHIPTGITVSMQDSRSQHQNKEKAFLVLNSRLAALNAAKENEAERLKRKNQVTSSDRSEKLRTYNFNQNRVTDHRIGLSMHDLSTFMQGEEKFDEFLEKIRIWNREQLLLHSEIV</sequence>
<accession>Q09691</accession>
<dbReference type="EMBL" id="CU329670">
    <property type="protein sequence ID" value="CAA90504.1"/>
    <property type="molecule type" value="Genomic_DNA"/>
</dbReference>
<dbReference type="PIR" id="S58161">
    <property type="entry name" value="S58161"/>
</dbReference>
<dbReference type="SMR" id="Q09691"/>
<dbReference type="BioGRID" id="277980">
    <property type="interactions" value="71"/>
</dbReference>
<dbReference type="FunCoup" id="Q09691">
    <property type="interactions" value="628"/>
</dbReference>
<dbReference type="STRING" id="284812.Q09691"/>
<dbReference type="iPTMnet" id="Q09691"/>
<dbReference type="PaxDb" id="4896-SPAC2F7.17.1"/>
<dbReference type="EnsemblFungi" id="SPAC2F7.17.1">
    <property type="protein sequence ID" value="SPAC2F7.17.1:pep"/>
    <property type="gene ID" value="SPAC2F7.17"/>
</dbReference>
<dbReference type="KEGG" id="spo:2541478"/>
<dbReference type="PomBase" id="SPAC2F7.17"/>
<dbReference type="VEuPathDB" id="FungiDB:SPAC2F7.17"/>
<dbReference type="eggNOG" id="KOG2726">
    <property type="taxonomic scope" value="Eukaryota"/>
</dbReference>
<dbReference type="HOGENOM" id="CLU_036856_0_8_1"/>
<dbReference type="InParanoid" id="Q09691"/>
<dbReference type="OMA" id="ECQQSRS"/>
<dbReference type="PhylomeDB" id="Q09691"/>
<dbReference type="PRO" id="PR:Q09691"/>
<dbReference type="Proteomes" id="UP000002485">
    <property type="component" value="Chromosome I"/>
</dbReference>
<dbReference type="GO" id="GO:0005743">
    <property type="term" value="C:mitochondrial inner membrane"/>
    <property type="evidence" value="ECO:0000314"/>
    <property type="project" value="PomBase"/>
</dbReference>
<dbReference type="GO" id="GO:0005759">
    <property type="term" value="C:mitochondrial matrix"/>
    <property type="evidence" value="ECO:0000305"/>
    <property type="project" value="PomBase"/>
</dbReference>
<dbReference type="GO" id="GO:0003747">
    <property type="term" value="F:translation release factor activity"/>
    <property type="evidence" value="ECO:0000250"/>
    <property type="project" value="PomBase"/>
</dbReference>
<dbReference type="GO" id="GO:0032543">
    <property type="term" value="P:mitochondrial translation"/>
    <property type="evidence" value="ECO:0000269"/>
    <property type="project" value="PomBase"/>
</dbReference>
<dbReference type="GO" id="GO:0070126">
    <property type="term" value="P:mitochondrial translational termination"/>
    <property type="evidence" value="ECO:0000250"/>
    <property type="project" value="PomBase"/>
</dbReference>
<dbReference type="FunFam" id="3.30.160.20:FF:000004">
    <property type="entry name" value="Peptide chain release factor 1"/>
    <property type="match status" value="1"/>
</dbReference>
<dbReference type="Gene3D" id="3.30.160.20">
    <property type="match status" value="1"/>
</dbReference>
<dbReference type="Gene3D" id="3.30.70.1660">
    <property type="match status" value="1"/>
</dbReference>
<dbReference type="Gene3D" id="6.10.140.1950">
    <property type="match status" value="1"/>
</dbReference>
<dbReference type="InterPro" id="IPR005139">
    <property type="entry name" value="PCRF"/>
</dbReference>
<dbReference type="InterPro" id="IPR000352">
    <property type="entry name" value="Pep_chain_release_fac_I"/>
</dbReference>
<dbReference type="InterPro" id="IPR045853">
    <property type="entry name" value="Pep_chain_release_fac_I_sf"/>
</dbReference>
<dbReference type="InterPro" id="IPR050057">
    <property type="entry name" value="Prokaryotic/Mito_RF"/>
</dbReference>
<dbReference type="PANTHER" id="PTHR43804">
    <property type="entry name" value="LD18447P"/>
    <property type="match status" value="1"/>
</dbReference>
<dbReference type="PANTHER" id="PTHR43804:SF7">
    <property type="entry name" value="LD18447P"/>
    <property type="match status" value="1"/>
</dbReference>
<dbReference type="Pfam" id="PF03462">
    <property type="entry name" value="PCRF"/>
    <property type="match status" value="1"/>
</dbReference>
<dbReference type="Pfam" id="PF00472">
    <property type="entry name" value="RF-1"/>
    <property type="match status" value="1"/>
</dbReference>
<dbReference type="SMART" id="SM00937">
    <property type="entry name" value="PCRF"/>
    <property type="match status" value="1"/>
</dbReference>
<dbReference type="SUPFAM" id="SSF75620">
    <property type="entry name" value="Release factor"/>
    <property type="match status" value="1"/>
</dbReference>
<dbReference type="PROSITE" id="PS00745">
    <property type="entry name" value="RF_PROK_I"/>
    <property type="match status" value="1"/>
</dbReference>
<evidence type="ECO:0000250" key="1"/>
<evidence type="ECO:0000255" key="2"/>
<evidence type="ECO:0000305" key="3"/>
<name>RF1M_SCHPO</name>
<feature type="transit peptide" description="Mitochondrion" evidence="2">
    <location>
        <begin position="1"/>
        <end status="unknown"/>
    </location>
</feature>
<feature type="chain" id="PRO_0000030338" description="Putative peptide chain release factor 1, mitochondrial">
    <location>
        <begin status="unknown"/>
        <end position="396"/>
    </location>
</feature>
<feature type="modified residue" description="N5-methylglutamine" evidence="1">
    <location>
        <position position="270"/>
    </location>
</feature>
<comment type="subcellular location">
    <subcellularLocation>
        <location evidence="3">Mitochondrion</location>
    </subcellularLocation>
</comment>
<comment type="PTM">
    <text evidence="1">Methylation of glutamine in the GGQ triplet is conserved from bacteria to mammals.</text>
</comment>
<comment type="similarity">
    <text evidence="3">Belongs to the prokaryotic/mitochondrial release factor family.</text>
</comment>
<organism>
    <name type="scientific">Schizosaccharomyces pombe (strain 972 / ATCC 24843)</name>
    <name type="common">Fission yeast</name>
    <dbReference type="NCBI Taxonomy" id="284812"/>
    <lineage>
        <taxon>Eukaryota</taxon>
        <taxon>Fungi</taxon>
        <taxon>Dikarya</taxon>
        <taxon>Ascomycota</taxon>
        <taxon>Taphrinomycotina</taxon>
        <taxon>Schizosaccharomycetes</taxon>
        <taxon>Schizosaccharomycetales</taxon>
        <taxon>Schizosaccharomycetaceae</taxon>
        <taxon>Schizosaccharomyces</taxon>
    </lineage>
</organism>
<proteinExistence type="inferred from homology"/>
<reference key="1">
    <citation type="journal article" date="2002" name="Nature">
        <title>The genome sequence of Schizosaccharomyces pombe.</title>
        <authorList>
            <person name="Wood V."/>
            <person name="Gwilliam R."/>
            <person name="Rajandream M.A."/>
            <person name="Lyne M.H."/>
            <person name="Lyne R."/>
            <person name="Stewart A."/>
            <person name="Sgouros J.G."/>
            <person name="Peat N."/>
            <person name="Hayles J."/>
            <person name="Baker S.G."/>
            <person name="Basham D."/>
            <person name="Bowman S."/>
            <person name="Brooks K."/>
            <person name="Brown D."/>
            <person name="Brown S."/>
            <person name="Chillingworth T."/>
            <person name="Churcher C.M."/>
            <person name="Collins M."/>
            <person name="Connor R."/>
            <person name="Cronin A."/>
            <person name="Davis P."/>
            <person name="Feltwell T."/>
            <person name="Fraser A."/>
            <person name="Gentles S."/>
            <person name="Goble A."/>
            <person name="Hamlin N."/>
            <person name="Harris D.E."/>
            <person name="Hidalgo J."/>
            <person name="Hodgson G."/>
            <person name="Holroyd S."/>
            <person name="Hornsby T."/>
            <person name="Howarth S."/>
            <person name="Huckle E.J."/>
            <person name="Hunt S."/>
            <person name="Jagels K."/>
            <person name="James K.D."/>
            <person name="Jones L."/>
            <person name="Jones M."/>
            <person name="Leather S."/>
            <person name="McDonald S."/>
            <person name="McLean J."/>
            <person name="Mooney P."/>
            <person name="Moule S."/>
            <person name="Mungall K.L."/>
            <person name="Murphy L.D."/>
            <person name="Niblett D."/>
            <person name="Odell C."/>
            <person name="Oliver K."/>
            <person name="O'Neil S."/>
            <person name="Pearson D."/>
            <person name="Quail M.A."/>
            <person name="Rabbinowitsch E."/>
            <person name="Rutherford K.M."/>
            <person name="Rutter S."/>
            <person name="Saunders D."/>
            <person name="Seeger K."/>
            <person name="Sharp S."/>
            <person name="Skelton J."/>
            <person name="Simmonds M.N."/>
            <person name="Squares R."/>
            <person name="Squares S."/>
            <person name="Stevens K."/>
            <person name="Taylor K."/>
            <person name="Taylor R.G."/>
            <person name="Tivey A."/>
            <person name="Walsh S.V."/>
            <person name="Warren T."/>
            <person name="Whitehead S."/>
            <person name="Woodward J.R."/>
            <person name="Volckaert G."/>
            <person name="Aert R."/>
            <person name="Robben J."/>
            <person name="Grymonprez B."/>
            <person name="Weltjens I."/>
            <person name="Vanstreels E."/>
            <person name="Rieger M."/>
            <person name="Schaefer M."/>
            <person name="Mueller-Auer S."/>
            <person name="Gabel C."/>
            <person name="Fuchs M."/>
            <person name="Duesterhoeft A."/>
            <person name="Fritzc C."/>
            <person name="Holzer E."/>
            <person name="Moestl D."/>
            <person name="Hilbert H."/>
            <person name="Borzym K."/>
            <person name="Langer I."/>
            <person name="Beck A."/>
            <person name="Lehrach H."/>
            <person name="Reinhardt R."/>
            <person name="Pohl T.M."/>
            <person name="Eger P."/>
            <person name="Zimmermann W."/>
            <person name="Wedler H."/>
            <person name="Wambutt R."/>
            <person name="Purnelle B."/>
            <person name="Goffeau A."/>
            <person name="Cadieu E."/>
            <person name="Dreano S."/>
            <person name="Gloux S."/>
            <person name="Lelaure V."/>
            <person name="Mottier S."/>
            <person name="Galibert F."/>
            <person name="Aves S.J."/>
            <person name="Xiang Z."/>
            <person name="Hunt C."/>
            <person name="Moore K."/>
            <person name="Hurst S.M."/>
            <person name="Lucas M."/>
            <person name="Rochet M."/>
            <person name="Gaillardin C."/>
            <person name="Tallada V.A."/>
            <person name="Garzon A."/>
            <person name="Thode G."/>
            <person name="Daga R.R."/>
            <person name="Cruzado L."/>
            <person name="Jimenez J."/>
            <person name="Sanchez M."/>
            <person name="del Rey F."/>
            <person name="Benito J."/>
            <person name="Dominguez A."/>
            <person name="Revuelta J.L."/>
            <person name="Moreno S."/>
            <person name="Armstrong J."/>
            <person name="Forsburg S.L."/>
            <person name="Cerutti L."/>
            <person name="Lowe T."/>
            <person name="McCombie W.R."/>
            <person name="Paulsen I."/>
            <person name="Potashkin J."/>
            <person name="Shpakovski G.V."/>
            <person name="Ussery D."/>
            <person name="Barrell B.G."/>
            <person name="Nurse P."/>
        </authorList>
    </citation>
    <scope>NUCLEOTIDE SEQUENCE [LARGE SCALE GENOMIC DNA]</scope>
    <source>
        <strain>972 / ATCC 24843</strain>
    </source>
</reference>
<keyword id="KW-0488">Methylation</keyword>
<keyword id="KW-0496">Mitochondrion</keyword>
<keyword id="KW-0648">Protein biosynthesis</keyword>
<keyword id="KW-1185">Reference proteome</keyword>
<keyword id="KW-0809">Transit peptide</keyword>
<protein>
    <recommendedName>
        <fullName>Putative peptide chain release factor 1, mitochondrial</fullName>
        <shortName>MRF-1</shortName>
        <shortName>MtRF-1</shortName>
    </recommendedName>
</protein>